<gene>
    <name evidence="1" type="primary">mnmE</name>
    <name evidence="1" type="synonym">trmE</name>
    <name type="ordered locus">BC_5486</name>
</gene>
<accession>Q814F6</accession>
<evidence type="ECO:0000255" key="1">
    <source>
        <dbReference type="HAMAP-Rule" id="MF_00379"/>
    </source>
</evidence>
<keyword id="KW-0963">Cytoplasm</keyword>
<keyword id="KW-0342">GTP-binding</keyword>
<keyword id="KW-0378">Hydrolase</keyword>
<keyword id="KW-0460">Magnesium</keyword>
<keyword id="KW-0479">Metal-binding</keyword>
<keyword id="KW-0547">Nucleotide-binding</keyword>
<keyword id="KW-0630">Potassium</keyword>
<keyword id="KW-1185">Reference proteome</keyword>
<keyword id="KW-0819">tRNA processing</keyword>
<organism>
    <name type="scientific">Bacillus cereus (strain ATCC 14579 / DSM 31 / CCUG 7414 / JCM 2152 / NBRC 15305 / NCIMB 9373 / NCTC 2599 / NRRL B-3711)</name>
    <dbReference type="NCBI Taxonomy" id="226900"/>
    <lineage>
        <taxon>Bacteria</taxon>
        <taxon>Bacillati</taxon>
        <taxon>Bacillota</taxon>
        <taxon>Bacilli</taxon>
        <taxon>Bacillales</taxon>
        <taxon>Bacillaceae</taxon>
        <taxon>Bacillus</taxon>
        <taxon>Bacillus cereus group</taxon>
    </lineage>
</organism>
<sequence length="458" mass="50583">MEFDTIAAISTALGEGAIAIVRVSGDDAVEKVDRIFKGKDLTEVPSHTIHYGHIVDLDTNQVIEEVMVSIMRAPRTFTRENIVEINCHGGLVSVNKVLQLILAQGVRLAEPGEFTKRAFLNGRIDLSQAEAVMDLIRAKTDRAMNVAINQMEGRLSKLIGLLRQEILETLAHVEVNIDYPEYDDVEEMTHNILIEKATHVRSEIEKILETSKQGKILREGIATAIIGRPNVGKSSLLNSLVQEKKAIVTDIAGTTRDVIEEYVNVRGVPLKLIDTAGIRETEDVVERIGVERSKEMMSQADLVLVVVNYSEALTNEDEDLFRAVQGKDFIVIVNKTDLPQAIDMERVTELAAGNRVITTSLIEEQGIDELEKAIADLFFEGTIDSADMTYVSNARHIGLLTQAGKTIGDAVEAIENGVPIDMVQIDLTRTWEILGEITGDTVHESLIDQLFSQFCLGK</sequence>
<reference key="1">
    <citation type="journal article" date="2003" name="Nature">
        <title>Genome sequence of Bacillus cereus and comparative analysis with Bacillus anthracis.</title>
        <authorList>
            <person name="Ivanova N."/>
            <person name="Sorokin A."/>
            <person name="Anderson I."/>
            <person name="Galleron N."/>
            <person name="Candelon B."/>
            <person name="Kapatral V."/>
            <person name="Bhattacharyya A."/>
            <person name="Reznik G."/>
            <person name="Mikhailova N."/>
            <person name="Lapidus A."/>
            <person name="Chu L."/>
            <person name="Mazur M."/>
            <person name="Goltsman E."/>
            <person name="Larsen N."/>
            <person name="D'Souza M."/>
            <person name="Walunas T."/>
            <person name="Grechkin Y."/>
            <person name="Pusch G."/>
            <person name="Haselkorn R."/>
            <person name="Fonstein M."/>
            <person name="Ehrlich S.D."/>
            <person name="Overbeek R."/>
            <person name="Kyrpides N.C."/>
        </authorList>
    </citation>
    <scope>NUCLEOTIDE SEQUENCE [LARGE SCALE GENOMIC DNA]</scope>
    <source>
        <strain>ATCC 14579 / DSM 31 / CCUG 7414 / JCM 2152 / NBRC 15305 / NCIMB 9373 / NCTC 2599 / NRRL B-3711</strain>
    </source>
</reference>
<dbReference type="EC" id="3.6.-.-" evidence="1"/>
<dbReference type="EMBL" id="AE016877">
    <property type="protein sequence ID" value="AAP12340.1"/>
    <property type="molecule type" value="Genomic_DNA"/>
</dbReference>
<dbReference type="RefSeq" id="NP_835139.1">
    <property type="nucleotide sequence ID" value="NC_004722.1"/>
</dbReference>
<dbReference type="RefSeq" id="WP_000393757.1">
    <property type="nucleotide sequence ID" value="NZ_CP138336.1"/>
</dbReference>
<dbReference type="SMR" id="Q814F6"/>
<dbReference type="STRING" id="226900.BC_5486"/>
<dbReference type="KEGG" id="bce:BC5486"/>
<dbReference type="PATRIC" id="fig|226900.8.peg.5664"/>
<dbReference type="HOGENOM" id="CLU_019624_4_1_9"/>
<dbReference type="OrthoDB" id="9805918at2"/>
<dbReference type="Proteomes" id="UP000001417">
    <property type="component" value="Chromosome"/>
</dbReference>
<dbReference type="GO" id="GO:0005737">
    <property type="term" value="C:cytoplasm"/>
    <property type="evidence" value="ECO:0000318"/>
    <property type="project" value="GO_Central"/>
</dbReference>
<dbReference type="GO" id="GO:0005829">
    <property type="term" value="C:cytosol"/>
    <property type="evidence" value="ECO:0000318"/>
    <property type="project" value="GO_Central"/>
</dbReference>
<dbReference type="GO" id="GO:0005525">
    <property type="term" value="F:GTP binding"/>
    <property type="evidence" value="ECO:0007669"/>
    <property type="project" value="UniProtKB-UniRule"/>
</dbReference>
<dbReference type="GO" id="GO:0003924">
    <property type="term" value="F:GTPase activity"/>
    <property type="evidence" value="ECO:0007669"/>
    <property type="project" value="UniProtKB-UniRule"/>
</dbReference>
<dbReference type="GO" id="GO:0046872">
    <property type="term" value="F:metal ion binding"/>
    <property type="evidence" value="ECO:0007669"/>
    <property type="project" value="UniProtKB-KW"/>
</dbReference>
<dbReference type="GO" id="GO:0030488">
    <property type="term" value="P:tRNA methylation"/>
    <property type="evidence" value="ECO:0000318"/>
    <property type="project" value="GO_Central"/>
</dbReference>
<dbReference type="GO" id="GO:0002098">
    <property type="term" value="P:tRNA wobble uridine modification"/>
    <property type="evidence" value="ECO:0000318"/>
    <property type="project" value="GO_Central"/>
</dbReference>
<dbReference type="CDD" id="cd04164">
    <property type="entry name" value="trmE"/>
    <property type="match status" value="1"/>
</dbReference>
<dbReference type="CDD" id="cd14858">
    <property type="entry name" value="TrmE_N"/>
    <property type="match status" value="1"/>
</dbReference>
<dbReference type="FunFam" id="3.30.1360.120:FF:000003">
    <property type="entry name" value="tRNA modification GTPase MnmE"/>
    <property type="match status" value="1"/>
</dbReference>
<dbReference type="FunFam" id="3.40.50.300:FF:000494">
    <property type="entry name" value="tRNA modification GTPase MnmE"/>
    <property type="match status" value="1"/>
</dbReference>
<dbReference type="Gene3D" id="3.40.50.300">
    <property type="entry name" value="P-loop containing nucleotide triphosphate hydrolases"/>
    <property type="match status" value="1"/>
</dbReference>
<dbReference type="Gene3D" id="3.30.1360.120">
    <property type="entry name" value="Probable tRNA modification gtpase trme, domain 1"/>
    <property type="match status" value="1"/>
</dbReference>
<dbReference type="Gene3D" id="1.20.120.430">
    <property type="entry name" value="tRNA modification GTPase MnmE domain 2"/>
    <property type="match status" value="1"/>
</dbReference>
<dbReference type="HAMAP" id="MF_00379">
    <property type="entry name" value="GTPase_MnmE"/>
    <property type="match status" value="1"/>
</dbReference>
<dbReference type="InterPro" id="IPR031168">
    <property type="entry name" value="G_TrmE"/>
</dbReference>
<dbReference type="InterPro" id="IPR006073">
    <property type="entry name" value="GTP-bd"/>
</dbReference>
<dbReference type="InterPro" id="IPR018948">
    <property type="entry name" value="GTP-bd_TrmE_N"/>
</dbReference>
<dbReference type="InterPro" id="IPR004520">
    <property type="entry name" value="GTPase_MnmE"/>
</dbReference>
<dbReference type="InterPro" id="IPR027368">
    <property type="entry name" value="MnmE_dom2"/>
</dbReference>
<dbReference type="InterPro" id="IPR025867">
    <property type="entry name" value="MnmE_helical"/>
</dbReference>
<dbReference type="InterPro" id="IPR027417">
    <property type="entry name" value="P-loop_NTPase"/>
</dbReference>
<dbReference type="InterPro" id="IPR005225">
    <property type="entry name" value="Small_GTP-bd"/>
</dbReference>
<dbReference type="InterPro" id="IPR027266">
    <property type="entry name" value="TrmE/GcvT_dom1"/>
</dbReference>
<dbReference type="NCBIfam" id="TIGR00450">
    <property type="entry name" value="mnmE_trmE_thdF"/>
    <property type="match status" value="1"/>
</dbReference>
<dbReference type="NCBIfam" id="NF003661">
    <property type="entry name" value="PRK05291.1-3"/>
    <property type="match status" value="1"/>
</dbReference>
<dbReference type="NCBIfam" id="TIGR00231">
    <property type="entry name" value="small_GTP"/>
    <property type="match status" value="1"/>
</dbReference>
<dbReference type="PANTHER" id="PTHR42714">
    <property type="entry name" value="TRNA MODIFICATION GTPASE GTPBP3"/>
    <property type="match status" value="1"/>
</dbReference>
<dbReference type="PANTHER" id="PTHR42714:SF2">
    <property type="entry name" value="TRNA MODIFICATION GTPASE GTPBP3, MITOCHONDRIAL"/>
    <property type="match status" value="1"/>
</dbReference>
<dbReference type="Pfam" id="PF01926">
    <property type="entry name" value="MMR_HSR1"/>
    <property type="match status" value="1"/>
</dbReference>
<dbReference type="Pfam" id="PF12631">
    <property type="entry name" value="MnmE_helical"/>
    <property type="match status" value="1"/>
</dbReference>
<dbReference type="Pfam" id="PF10396">
    <property type="entry name" value="TrmE_N"/>
    <property type="match status" value="1"/>
</dbReference>
<dbReference type="SUPFAM" id="SSF52540">
    <property type="entry name" value="P-loop containing nucleoside triphosphate hydrolases"/>
    <property type="match status" value="1"/>
</dbReference>
<dbReference type="SUPFAM" id="SSF116878">
    <property type="entry name" value="TrmE connector domain"/>
    <property type="match status" value="1"/>
</dbReference>
<dbReference type="PROSITE" id="PS51709">
    <property type="entry name" value="G_TRME"/>
    <property type="match status" value="1"/>
</dbReference>
<name>MNME_BACCR</name>
<proteinExistence type="inferred from homology"/>
<comment type="function">
    <text evidence="1">Exhibits a very high intrinsic GTPase hydrolysis rate. Involved in the addition of a carboxymethylaminomethyl (cmnm) group at the wobble position (U34) of certain tRNAs, forming tRNA-cmnm(5)s(2)U34.</text>
</comment>
<comment type="cofactor">
    <cofactor evidence="1">
        <name>K(+)</name>
        <dbReference type="ChEBI" id="CHEBI:29103"/>
    </cofactor>
    <text evidence="1">Binds 1 potassium ion per subunit.</text>
</comment>
<comment type="subunit">
    <text evidence="1">Homodimer. Heterotetramer of two MnmE and two MnmG subunits.</text>
</comment>
<comment type="subcellular location">
    <subcellularLocation>
        <location evidence="1">Cytoplasm</location>
    </subcellularLocation>
</comment>
<comment type="similarity">
    <text evidence="1">Belongs to the TRAFAC class TrmE-Era-EngA-EngB-Septin-like GTPase superfamily. TrmE GTPase family.</text>
</comment>
<feature type="chain" id="PRO_0000188848" description="tRNA modification GTPase MnmE">
    <location>
        <begin position="1"/>
        <end position="458"/>
    </location>
</feature>
<feature type="domain" description="TrmE-type G">
    <location>
        <begin position="220"/>
        <end position="379"/>
    </location>
</feature>
<feature type="binding site" evidence="1">
    <location>
        <position position="22"/>
    </location>
    <ligand>
        <name>(6S)-5-formyl-5,6,7,8-tetrahydrofolate</name>
        <dbReference type="ChEBI" id="CHEBI:57457"/>
    </ligand>
</feature>
<feature type="binding site" evidence="1">
    <location>
        <position position="84"/>
    </location>
    <ligand>
        <name>(6S)-5-formyl-5,6,7,8-tetrahydrofolate</name>
        <dbReference type="ChEBI" id="CHEBI:57457"/>
    </ligand>
</feature>
<feature type="binding site" evidence="1">
    <location>
        <position position="123"/>
    </location>
    <ligand>
        <name>(6S)-5-formyl-5,6,7,8-tetrahydrofolate</name>
        <dbReference type="ChEBI" id="CHEBI:57457"/>
    </ligand>
</feature>
<feature type="binding site" evidence="1">
    <location>
        <begin position="230"/>
        <end position="235"/>
    </location>
    <ligand>
        <name>GTP</name>
        <dbReference type="ChEBI" id="CHEBI:37565"/>
    </ligand>
</feature>
<feature type="binding site" evidence="1">
    <location>
        <position position="230"/>
    </location>
    <ligand>
        <name>K(+)</name>
        <dbReference type="ChEBI" id="CHEBI:29103"/>
    </ligand>
</feature>
<feature type="binding site" evidence="1">
    <location>
        <position position="234"/>
    </location>
    <ligand>
        <name>Mg(2+)</name>
        <dbReference type="ChEBI" id="CHEBI:18420"/>
    </ligand>
</feature>
<feature type="binding site" evidence="1">
    <location>
        <begin position="249"/>
        <end position="255"/>
    </location>
    <ligand>
        <name>GTP</name>
        <dbReference type="ChEBI" id="CHEBI:37565"/>
    </ligand>
</feature>
<feature type="binding site" evidence="1">
    <location>
        <position position="249"/>
    </location>
    <ligand>
        <name>K(+)</name>
        <dbReference type="ChEBI" id="CHEBI:29103"/>
    </ligand>
</feature>
<feature type="binding site" evidence="1">
    <location>
        <position position="251"/>
    </location>
    <ligand>
        <name>K(+)</name>
        <dbReference type="ChEBI" id="CHEBI:29103"/>
    </ligand>
</feature>
<feature type="binding site" evidence="1">
    <location>
        <position position="254"/>
    </location>
    <ligand>
        <name>K(+)</name>
        <dbReference type="ChEBI" id="CHEBI:29103"/>
    </ligand>
</feature>
<feature type="binding site" evidence="1">
    <location>
        <position position="255"/>
    </location>
    <ligand>
        <name>Mg(2+)</name>
        <dbReference type="ChEBI" id="CHEBI:18420"/>
    </ligand>
</feature>
<feature type="binding site" evidence="1">
    <location>
        <begin position="274"/>
        <end position="277"/>
    </location>
    <ligand>
        <name>GTP</name>
        <dbReference type="ChEBI" id="CHEBI:37565"/>
    </ligand>
</feature>
<feature type="binding site" evidence="1">
    <location>
        <position position="458"/>
    </location>
    <ligand>
        <name>(6S)-5-formyl-5,6,7,8-tetrahydrofolate</name>
        <dbReference type="ChEBI" id="CHEBI:57457"/>
    </ligand>
</feature>
<protein>
    <recommendedName>
        <fullName evidence="1">tRNA modification GTPase MnmE</fullName>
        <ecNumber evidence="1">3.6.-.-</ecNumber>
    </recommendedName>
</protein>